<sequence length="172" mass="18590">MDRHRDFGKDRLRDKEFTEKLIKLNRTAKVVKGGRRFSFSALTVVGDQKGRVGFGFGKAGDVSEAIRKSVERAKRSMVLFPLKDGTIPHEVQAKFKGSLVLLRPACSGTGIIAGGTVRAIMEVAGATDVLSKSLGSNSAINVVRATFGAVAQLMDARKLARERGKALVDMWG</sequence>
<organism>
    <name type="scientific">Treponema pallidum (strain Nichols)</name>
    <dbReference type="NCBI Taxonomy" id="243276"/>
    <lineage>
        <taxon>Bacteria</taxon>
        <taxon>Pseudomonadati</taxon>
        <taxon>Spirochaetota</taxon>
        <taxon>Spirochaetia</taxon>
        <taxon>Spirochaetales</taxon>
        <taxon>Treponemataceae</taxon>
        <taxon>Treponema</taxon>
    </lineage>
</organism>
<protein>
    <recommendedName>
        <fullName evidence="1">Small ribosomal subunit protein uS5</fullName>
    </recommendedName>
    <alternativeName>
        <fullName evidence="2">30S ribosomal protein S5</fullName>
    </alternativeName>
</protein>
<proteinExistence type="inferred from homology"/>
<evidence type="ECO:0000255" key="1">
    <source>
        <dbReference type="HAMAP-Rule" id="MF_01307"/>
    </source>
</evidence>
<evidence type="ECO:0000305" key="2"/>
<accession>O83236</accession>
<dbReference type="EMBL" id="AE000520">
    <property type="protein sequence ID" value="AAC65190.1"/>
    <property type="molecule type" value="Genomic_DNA"/>
</dbReference>
<dbReference type="PIR" id="H71356">
    <property type="entry name" value="H71356"/>
</dbReference>
<dbReference type="RefSeq" id="WP_010881653.1">
    <property type="nucleotide sequence ID" value="NC_021490.2"/>
</dbReference>
<dbReference type="SMR" id="O83236"/>
<dbReference type="IntAct" id="O83236">
    <property type="interactions" value="1"/>
</dbReference>
<dbReference type="STRING" id="243276.TP_0206"/>
<dbReference type="EnsemblBacteria" id="AAC65190">
    <property type="protein sequence ID" value="AAC65190"/>
    <property type="gene ID" value="TP_0206"/>
</dbReference>
<dbReference type="GeneID" id="93875993"/>
<dbReference type="KEGG" id="tpa:TP_0206"/>
<dbReference type="KEGG" id="tpw:TPANIC_0206"/>
<dbReference type="eggNOG" id="COG0098">
    <property type="taxonomic scope" value="Bacteria"/>
</dbReference>
<dbReference type="HOGENOM" id="CLU_065898_2_2_12"/>
<dbReference type="OrthoDB" id="9809045at2"/>
<dbReference type="Proteomes" id="UP000000811">
    <property type="component" value="Chromosome"/>
</dbReference>
<dbReference type="GO" id="GO:0015935">
    <property type="term" value="C:small ribosomal subunit"/>
    <property type="evidence" value="ECO:0007669"/>
    <property type="project" value="InterPro"/>
</dbReference>
<dbReference type="GO" id="GO:0019843">
    <property type="term" value="F:rRNA binding"/>
    <property type="evidence" value="ECO:0007669"/>
    <property type="project" value="UniProtKB-UniRule"/>
</dbReference>
<dbReference type="GO" id="GO:0003735">
    <property type="term" value="F:structural constituent of ribosome"/>
    <property type="evidence" value="ECO:0007669"/>
    <property type="project" value="InterPro"/>
</dbReference>
<dbReference type="GO" id="GO:0006412">
    <property type="term" value="P:translation"/>
    <property type="evidence" value="ECO:0007669"/>
    <property type="project" value="UniProtKB-UniRule"/>
</dbReference>
<dbReference type="FunFam" id="3.30.160.20:FF:000001">
    <property type="entry name" value="30S ribosomal protein S5"/>
    <property type="match status" value="1"/>
</dbReference>
<dbReference type="FunFam" id="3.30.230.10:FF:000002">
    <property type="entry name" value="30S ribosomal protein S5"/>
    <property type="match status" value="1"/>
</dbReference>
<dbReference type="Gene3D" id="3.30.160.20">
    <property type="match status" value="1"/>
</dbReference>
<dbReference type="Gene3D" id="3.30.230.10">
    <property type="match status" value="1"/>
</dbReference>
<dbReference type="HAMAP" id="MF_01307_B">
    <property type="entry name" value="Ribosomal_uS5_B"/>
    <property type="match status" value="1"/>
</dbReference>
<dbReference type="InterPro" id="IPR020568">
    <property type="entry name" value="Ribosomal_Su5_D2-typ_SF"/>
</dbReference>
<dbReference type="InterPro" id="IPR000851">
    <property type="entry name" value="Ribosomal_uS5"/>
</dbReference>
<dbReference type="InterPro" id="IPR005712">
    <property type="entry name" value="Ribosomal_uS5_bac-type"/>
</dbReference>
<dbReference type="InterPro" id="IPR005324">
    <property type="entry name" value="Ribosomal_uS5_C"/>
</dbReference>
<dbReference type="InterPro" id="IPR013810">
    <property type="entry name" value="Ribosomal_uS5_N"/>
</dbReference>
<dbReference type="InterPro" id="IPR018192">
    <property type="entry name" value="Ribosomal_uS5_N_CS"/>
</dbReference>
<dbReference type="InterPro" id="IPR014721">
    <property type="entry name" value="Ribsml_uS5_D2-typ_fold_subgr"/>
</dbReference>
<dbReference type="NCBIfam" id="TIGR01021">
    <property type="entry name" value="rpsE_bact"/>
    <property type="match status" value="1"/>
</dbReference>
<dbReference type="PANTHER" id="PTHR48277">
    <property type="entry name" value="MITOCHONDRIAL RIBOSOMAL PROTEIN S5"/>
    <property type="match status" value="1"/>
</dbReference>
<dbReference type="PANTHER" id="PTHR48277:SF1">
    <property type="entry name" value="MITOCHONDRIAL RIBOSOMAL PROTEIN S5"/>
    <property type="match status" value="1"/>
</dbReference>
<dbReference type="Pfam" id="PF00333">
    <property type="entry name" value="Ribosomal_S5"/>
    <property type="match status" value="1"/>
</dbReference>
<dbReference type="Pfam" id="PF03719">
    <property type="entry name" value="Ribosomal_S5_C"/>
    <property type="match status" value="1"/>
</dbReference>
<dbReference type="SUPFAM" id="SSF54768">
    <property type="entry name" value="dsRNA-binding domain-like"/>
    <property type="match status" value="1"/>
</dbReference>
<dbReference type="SUPFAM" id="SSF54211">
    <property type="entry name" value="Ribosomal protein S5 domain 2-like"/>
    <property type="match status" value="1"/>
</dbReference>
<dbReference type="PROSITE" id="PS00585">
    <property type="entry name" value="RIBOSOMAL_S5"/>
    <property type="match status" value="1"/>
</dbReference>
<dbReference type="PROSITE" id="PS50881">
    <property type="entry name" value="S5_DSRBD"/>
    <property type="match status" value="1"/>
</dbReference>
<keyword id="KW-1185">Reference proteome</keyword>
<keyword id="KW-0687">Ribonucleoprotein</keyword>
<keyword id="KW-0689">Ribosomal protein</keyword>
<keyword id="KW-0694">RNA-binding</keyword>
<keyword id="KW-0699">rRNA-binding</keyword>
<feature type="chain" id="PRO_0000131625" description="Small ribosomal subunit protein uS5">
    <location>
        <begin position="1"/>
        <end position="172"/>
    </location>
</feature>
<feature type="domain" description="S5 DRBM" evidence="1">
    <location>
        <begin position="17"/>
        <end position="80"/>
    </location>
</feature>
<reference key="1">
    <citation type="journal article" date="1998" name="Science">
        <title>Complete genome sequence of Treponema pallidum, the syphilis spirochete.</title>
        <authorList>
            <person name="Fraser C.M."/>
            <person name="Norris S.J."/>
            <person name="Weinstock G.M."/>
            <person name="White O."/>
            <person name="Sutton G.G."/>
            <person name="Dodson R.J."/>
            <person name="Gwinn M.L."/>
            <person name="Hickey E.K."/>
            <person name="Clayton R.A."/>
            <person name="Ketchum K.A."/>
            <person name="Sodergren E."/>
            <person name="Hardham J.M."/>
            <person name="McLeod M.P."/>
            <person name="Salzberg S.L."/>
            <person name="Peterson J.D."/>
            <person name="Khalak H.G."/>
            <person name="Richardson D.L."/>
            <person name="Howell J.K."/>
            <person name="Chidambaram M."/>
            <person name="Utterback T.R."/>
            <person name="McDonald L.A."/>
            <person name="Artiach P."/>
            <person name="Bowman C."/>
            <person name="Cotton M.D."/>
            <person name="Fujii C."/>
            <person name="Garland S.A."/>
            <person name="Hatch B."/>
            <person name="Horst K."/>
            <person name="Roberts K.M."/>
            <person name="Sandusky M."/>
            <person name="Weidman J.F."/>
            <person name="Smith H.O."/>
            <person name="Venter J.C."/>
        </authorList>
    </citation>
    <scope>NUCLEOTIDE SEQUENCE [LARGE SCALE GENOMIC DNA]</scope>
    <source>
        <strain>Nichols</strain>
    </source>
</reference>
<comment type="function">
    <text evidence="1">With S4 and S12 plays an important role in translational accuracy.</text>
</comment>
<comment type="function">
    <text evidence="1">Located at the back of the 30S subunit body where it stabilizes the conformation of the head with respect to the body.</text>
</comment>
<comment type="subunit">
    <text evidence="1">Part of the 30S ribosomal subunit. Contacts proteins S4 and S8.</text>
</comment>
<comment type="domain">
    <text>The N-terminal domain interacts with the head of the 30S subunit; the C-terminal domain interacts with the body and contacts protein S4. The interaction surface between S4 and S5 is involved in control of translational fidelity.</text>
</comment>
<comment type="similarity">
    <text evidence="1">Belongs to the universal ribosomal protein uS5 family.</text>
</comment>
<gene>
    <name evidence="1" type="primary">rpsE</name>
    <name type="ordered locus">TP_0206</name>
</gene>
<name>RS5_TREPA</name>